<proteinExistence type="evidence at transcript level"/>
<organism>
    <name type="scientific">Meleagris gallopavo</name>
    <name type="common">Wild turkey</name>
    <dbReference type="NCBI Taxonomy" id="9103"/>
    <lineage>
        <taxon>Eukaryota</taxon>
        <taxon>Metazoa</taxon>
        <taxon>Chordata</taxon>
        <taxon>Craniata</taxon>
        <taxon>Vertebrata</taxon>
        <taxon>Euteleostomi</taxon>
        <taxon>Archelosauria</taxon>
        <taxon>Archosauria</taxon>
        <taxon>Dinosauria</taxon>
        <taxon>Saurischia</taxon>
        <taxon>Theropoda</taxon>
        <taxon>Coelurosauria</taxon>
        <taxon>Aves</taxon>
        <taxon>Neognathae</taxon>
        <taxon>Galloanserae</taxon>
        <taxon>Galliformes</taxon>
        <taxon>Phasianidae</taxon>
        <taxon>Meleagridinae</taxon>
        <taxon>Meleagris</taxon>
    </lineage>
</organism>
<dbReference type="EC" id="1.2.1.12" evidence="1"/>
<dbReference type="EC" id="2.6.99.-" evidence="2"/>
<dbReference type="EMBL" id="U94327">
    <property type="protein sequence ID" value="AAB93894.1"/>
    <property type="molecule type" value="mRNA"/>
</dbReference>
<dbReference type="SMR" id="O57672"/>
<dbReference type="InParanoid" id="O57672"/>
<dbReference type="OrthoDB" id="1152826at2759"/>
<dbReference type="UniPathway" id="UPA00109">
    <property type="reaction ID" value="UER00184"/>
</dbReference>
<dbReference type="Proteomes" id="UP000001645">
    <property type="component" value="Unplaced"/>
</dbReference>
<dbReference type="GO" id="GO:0005737">
    <property type="term" value="C:cytoplasm"/>
    <property type="evidence" value="ECO:0000250"/>
    <property type="project" value="UniProtKB"/>
</dbReference>
<dbReference type="GO" id="GO:0005829">
    <property type="term" value="C:cytosol"/>
    <property type="evidence" value="ECO:0000250"/>
    <property type="project" value="UniProtKB"/>
</dbReference>
<dbReference type="GO" id="GO:0015630">
    <property type="term" value="C:microtubule cytoskeleton"/>
    <property type="evidence" value="ECO:0000250"/>
    <property type="project" value="UniProtKB"/>
</dbReference>
<dbReference type="GO" id="GO:0005634">
    <property type="term" value="C:nucleus"/>
    <property type="evidence" value="ECO:0000250"/>
    <property type="project" value="UniProtKB"/>
</dbReference>
<dbReference type="GO" id="GO:0004365">
    <property type="term" value="F:glyceraldehyde-3-phosphate dehydrogenase (NAD+) (phosphorylating) activity"/>
    <property type="evidence" value="ECO:0000250"/>
    <property type="project" value="UniProtKB"/>
</dbReference>
<dbReference type="GO" id="GO:0008017">
    <property type="term" value="F:microtubule binding"/>
    <property type="evidence" value="ECO:0000250"/>
    <property type="project" value="UniProtKB"/>
</dbReference>
<dbReference type="GO" id="GO:0051287">
    <property type="term" value="F:NAD binding"/>
    <property type="evidence" value="ECO:0007669"/>
    <property type="project" value="InterPro"/>
</dbReference>
<dbReference type="GO" id="GO:0035605">
    <property type="term" value="F:peptidyl-cysteine S-nitrosylase activity"/>
    <property type="evidence" value="ECO:0000250"/>
    <property type="project" value="UniProtKB"/>
</dbReference>
<dbReference type="GO" id="GO:0006096">
    <property type="term" value="P:glycolytic process"/>
    <property type="evidence" value="ECO:0007669"/>
    <property type="project" value="UniProtKB-UniPathway"/>
</dbReference>
<dbReference type="GO" id="GO:0000226">
    <property type="term" value="P:microtubule cytoskeleton organization"/>
    <property type="evidence" value="ECO:0000250"/>
    <property type="project" value="UniProtKB"/>
</dbReference>
<dbReference type="GO" id="GO:0051402">
    <property type="term" value="P:neuron apoptotic process"/>
    <property type="evidence" value="ECO:0000250"/>
    <property type="project" value="UniProtKB"/>
</dbReference>
<dbReference type="GO" id="GO:0035606">
    <property type="term" value="P:peptidyl-cysteine S-trans-nitrosylation"/>
    <property type="evidence" value="ECO:0000250"/>
    <property type="project" value="UniProtKB"/>
</dbReference>
<dbReference type="GO" id="GO:0043123">
    <property type="term" value="P:positive regulation of canonical NF-kappaB signal transduction"/>
    <property type="evidence" value="ECO:0000250"/>
    <property type="project" value="UniProtKB"/>
</dbReference>
<dbReference type="GO" id="GO:0032481">
    <property type="term" value="P:positive regulation of type I interferon production"/>
    <property type="evidence" value="ECO:0000250"/>
    <property type="project" value="UniProtKB"/>
</dbReference>
<dbReference type="GO" id="GO:0050821">
    <property type="term" value="P:protein stabilization"/>
    <property type="evidence" value="ECO:0000250"/>
    <property type="project" value="UniProtKB"/>
</dbReference>
<dbReference type="CDD" id="cd18126">
    <property type="entry name" value="GAPDH_I_C"/>
    <property type="match status" value="1"/>
</dbReference>
<dbReference type="FunFam" id="3.30.360.10:FF:000001">
    <property type="entry name" value="Glyceraldehyde-3-phosphate dehydrogenase"/>
    <property type="match status" value="1"/>
</dbReference>
<dbReference type="FunFam" id="3.40.50.720:FF:001387">
    <property type="entry name" value="Uncharacterized protein"/>
    <property type="match status" value="1"/>
</dbReference>
<dbReference type="Gene3D" id="3.30.360.10">
    <property type="entry name" value="Dihydrodipicolinate Reductase, domain 2"/>
    <property type="match status" value="1"/>
</dbReference>
<dbReference type="Gene3D" id="3.40.50.720">
    <property type="entry name" value="NAD(P)-binding Rossmann-like Domain"/>
    <property type="match status" value="1"/>
</dbReference>
<dbReference type="InterPro" id="IPR020831">
    <property type="entry name" value="GlycerAld/Erythrose_P_DH"/>
</dbReference>
<dbReference type="InterPro" id="IPR020829">
    <property type="entry name" value="GlycerAld_3-P_DH_cat"/>
</dbReference>
<dbReference type="InterPro" id="IPR020828">
    <property type="entry name" value="GlycerAld_3-P_DH_NAD(P)-bd"/>
</dbReference>
<dbReference type="InterPro" id="IPR036291">
    <property type="entry name" value="NAD(P)-bd_dom_sf"/>
</dbReference>
<dbReference type="PANTHER" id="PTHR10836">
    <property type="entry name" value="GLYCERALDEHYDE 3-PHOSPHATE DEHYDROGENASE"/>
    <property type="match status" value="1"/>
</dbReference>
<dbReference type="PANTHER" id="PTHR10836:SF111">
    <property type="entry name" value="GLYCERALDEHYDE-3-PHOSPHATE DEHYDROGENASE"/>
    <property type="match status" value="1"/>
</dbReference>
<dbReference type="Pfam" id="PF02800">
    <property type="entry name" value="Gp_dh_C"/>
    <property type="match status" value="1"/>
</dbReference>
<dbReference type="PRINTS" id="PR00078">
    <property type="entry name" value="G3PDHDRGNASE"/>
</dbReference>
<dbReference type="SMART" id="SM00846">
    <property type="entry name" value="Gp_dh_N"/>
    <property type="match status" value="1"/>
</dbReference>
<dbReference type="SUPFAM" id="SSF55347">
    <property type="entry name" value="Glyceraldehyde-3-phosphate dehydrogenase-like, C-terminal domain"/>
    <property type="match status" value="1"/>
</dbReference>
<dbReference type="SUPFAM" id="SSF51735">
    <property type="entry name" value="NAD(P)-binding Rossmann-fold domains"/>
    <property type="match status" value="1"/>
</dbReference>
<feature type="chain" id="PRO_0000145499" description="Glyceraldehyde-3-phosphate dehydrogenase">
    <location>
        <begin position="1" status="less than"/>
        <end position="234" status="greater than"/>
    </location>
</feature>
<feature type="active site" description="Nucleophile" evidence="1">
    <location>
        <position position="61"/>
    </location>
</feature>
<feature type="binding site" evidence="1">
    <location>
        <position position="31"/>
    </location>
    <ligand>
        <name>NAD(+)</name>
        <dbReference type="ChEBI" id="CHEBI:57540"/>
    </ligand>
</feature>
<feature type="binding site" evidence="3">
    <location>
        <begin position="60"/>
        <end position="62"/>
    </location>
    <ligand>
        <name>D-glyceraldehyde 3-phosphate</name>
        <dbReference type="ChEBI" id="CHEBI:59776"/>
    </ligand>
</feature>
<feature type="binding site" evidence="3">
    <location>
        <position position="91"/>
    </location>
    <ligand>
        <name>D-glyceraldehyde 3-phosphate</name>
        <dbReference type="ChEBI" id="CHEBI:59776"/>
    </ligand>
</feature>
<feature type="binding site" evidence="3">
    <location>
        <begin position="120"/>
        <end position="121"/>
    </location>
    <ligand>
        <name>D-glyceraldehyde 3-phosphate</name>
        <dbReference type="ChEBI" id="CHEBI:59776"/>
    </ligand>
</feature>
<feature type="binding site" evidence="1">
    <location>
        <position position="225"/>
    </location>
    <ligand>
        <name>NAD(+)</name>
        <dbReference type="ChEBI" id="CHEBI:57540"/>
    </ligand>
</feature>
<feature type="site" description="Activates thiol group during catalysis" evidence="1">
    <location>
        <position position="88"/>
    </location>
</feature>
<feature type="modified residue" description="S-nitrosocysteine" evidence="2">
    <location>
        <position position="61"/>
    </location>
</feature>
<feature type="non-terminal residue">
    <location>
        <position position="1"/>
    </location>
</feature>
<feature type="non-terminal residue">
    <location>
        <position position="234"/>
    </location>
</feature>
<keyword id="KW-0053">Apoptosis</keyword>
<keyword id="KW-0963">Cytoplasm</keyword>
<keyword id="KW-0206">Cytoskeleton</keyword>
<keyword id="KW-0324">Glycolysis</keyword>
<keyword id="KW-0520">NAD</keyword>
<keyword id="KW-0539">Nucleus</keyword>
<keyword id="KW-0560">Oxidoreductase</keyword>
<keyword id="KW-1185">Reference proteome</keyword>
<keyword id="KW-0702">S-nitrosylation</keyword>
<keyword id="KW-0808">Transferase</keyword>
<sequence>AEYVVESTGVFTTMEKAGAHLKGGAKRVIISAPSADAPMFVMGVNHEKYDKSLKIVSNALCTTNCLAPLAKVIHDNFGIVEGLMTTVHAITATQKTVDGPFGKLWRDGRGAAQNIIPASTGAAKAVGKVIPELNGKLTGMAFHVPTPNVSVVDLTCRLEKPAKYDDIKRVVKAAADGPLKGILGYTEDQVVSCDFNGDSHSSTFDAGAGIALNDHFVKLVSWYDNEFGYSNRVV</sequence>
<protein>
    <recommendedName>
        <fullName>Glyceraldehyde-3-phosphate dehydrogenase</fullName>
        <shortName>GAPDH</shortName>
        <ecNumber evidence="1">1.2.1.12</ecNumber>
    </recommendedName>
    <alternativeName>
        <fullName evidence="5">Peptidyl-cysteine S-nitrosylase GAPDH</fullName>
        <ecNumber evidence="2">2.6.99.-</ecNumber>
    </alternativeName>
</protein>
<reference key="1">
    <citation type="submission" date="1997-03" db="EMBL/GenBank/DDBJ databases">
        <authorList>
            <person name="Hsu C."/>
            <person name="el Halawani M.E."/>
            <person name="Foster D.N."/>
        </authorList>
    </citation>
    <scope>NUCLEOTIDE SEQUENCE [MRNA]</scope>
    <source>
        <tissue>Small intestine</tissue>
    </source>
</reference>
<name>G3P_MELGA</name>
<gene>
    <name type="primary">GAPDH</name>
    <name type="synonym">GAPD</name>
</gene>
<evidence type="ECO:0000250" key="1">
    <source>
        <dbReference type="UniProtKB" id="P04406"/>
    </source>
</evidence>
<evidence type="ECO:0000250" key="2">
    <source>
        <dbReference type="UniProtKB" id="P04797"/>
    </source>
</evidence>
<evidence type="ECO:0000250" key="3">
    <source>
        <dbReference type="UniProtKB" id="P22513"/>
    </source>
</evidence>
<evidence type="ECO:0000255" key="4">
    <source>
        <dbReference type="PROSITE-ProRule" id="PRU10009"/>
    </source>
</evidence>
<evidence type="ECO:0000305" key="5"/>
<comment type="function">
    <text evidence="1 2">Has both glyceraldehyde-3-phosphate dehydrogenase and nitrosylase activities, thereby playing a role in glycolysis and nuclear functions, respectively. Glyceraldehyde-3-phosphate dehydrogenase is a key enzyme in glycolysis that catalyzes the first step of the pathway by converting D-glyceraldehyde 3-phosphate (G3P) into 3-phospho-D-glyceroyl phosphate (By similarity). Participates in nuclear events including transcription, RNA transport, DNA replication and apoptosis. Nuclear functions are probably due to the nitrosylase activity that mediates cysteine S-nitrosylation of nuclear target proteins such as SIRT1, HDAC2 and PRKDC (By similarity).</text>
</comment>
<comment type="catalytic activity">
    <reaction evidence="1 4">
        <text>D-glyceraldehyde 3-phosphate + phosphate + NAD(+) = (2R)-3-phospho-glyceroyl phosphate + NADH + H(+)</text>
        <dbReference type="Rhea" id="RHEA:10300"/>
        <dbReference type="ChEBI" id="CHEBI:15378"/>
        <dbReference type="ChEBI" id="CHEBI:43474"/>
        <dbReference type="ChEBI" id="CHEBI:57540"/>
        <dbReference type="ChEBI" id="CHEBI:57604"/>
        <dbReference type="ChEBI" id="CHEBI:57945"/>
        <dbReference type="ChEBI" id="CHEBI:59776"/>
        <dbReference type="EC" id="1.2.1.12"/>
    </reaction>
</comment>
<comment type="catalytic activity">
    <reaction evidence="2">
        <text>S-nitroso-L-cysteinyl-[GAPDH] + L-cysteinyl-[protein] = L-cysteinyl-[GAPDH] + S-nitroso-L-cysteinyl-[protein]</text>
        <dbReference type="Rhea" id="RHEA:66684"/>
        <dbReference type="Rhea" id="RHEA-COMP:10131"/>
        <dbReference type="Rhea" id="RHEA-COMP:17089"/>
        <dbReference type="Rhea" id="RHEA-COMP:17090"/>
        <dbReference type="Rhea" id="RHEA-COMP:17091"/>
        <dbReference type="ChEBI" id="CHEBI:29950"/>
        <dbReference type="ChEBI" id="CHEBI:149494"/>
    </reaction>
    <physiologicalReaction direction="left-to-right" evidence="2">
        <dbReference type="Rhea" id="RHEA:66685"/>
    </physiologicalReaction>
</comment>
<comment type="pathway">
    <text>Carbohydrate degradation; glycolysis; pyruvate from D-glyceraldehyde 3-phosphate: step 1/5.</text>
</comment>
<comment type="subunit">
    <text evidence="1">Homotetramer.</text>
</comment>
<comment type="subcellular location">
    <subcellularLocation>
        <location evidence="2">Cytoplasm</location>
        <location evidence="2">Cytosol</location>
    </subcellularLocation>
    <subcellularLocation>
        <location evidence="2">Cytoplasm</location>
        <location evidence="2">Cytoskeleton</location>
    </subcellularLocation>
    <subcellularLocation>
        <location evidence="2">Nucleus</location>
    </subcellularLocation>
</comment>
<comment type="PTM">
    <text evidence="2">S-nitrosylation of Cys-61 leads to translocation to the nucleus.</text>
</comment>
<comment type="similarity">
    <text evidence="5">Belongs to the glyceraldehyde-3-phosphate dehydrogenase family.</text>
</comment>
<accession>O57672</accession>